<gene>
    <name evidence="1" type="primary">glsA</name>
    <name type="ordered locus">STM1525</name>
</gene>
<feature type="chain" id="PRO_0000110622" description="Glutaminase">
    <location>
        <begin position="1"/>
        <end position="308"/>
    </location>
</feature>
<feature type="binding site" evidence="1">
    <location>
        <position position="66"/>
    </location>
    <ligand>
        <name>substrate</name>
    </ligand>
</feature>
<feature type="binding site" evidence="1">
    <location>
        <position position="117"/>
    </location>
    <ligand>
        <name>substrate</name>
    </ligand>
</feature>
<feature type="binding site" evidence="1">
    <location>
        <position position="161"/>
    </location>
    <ligand>
        <name>substrate</name>
    </ligand>
</feature>
<feature type="binding site" evidence="1">
    <location>
        <position position="168"/>
    </location>
    <ligand>
        <name>substrate</name>
    </ligand>
</feature>
<feature type="binding site" evidence="1">
    <location>
        <position position="192"/>
    </location>
    <ligand>
        <name>substrate</name>
    </ligand>
</feature>
<feature type="binding site" evidence="1">
    <location>
        <position position="244"/>
    </location>
    <ligand>
        <name>substrate</name>
    </ligand>
</feature>
<feature type="binding site" evidence="1">
    <location>
        <position position="262"/>
    </location>
    <ligand>
        <name>substrate</name>
    </ligand>
</feature>
<protein>
    <recommendedName>
        <fullName evidence="1">Glutaminase</fullName>
        <ecNumber evidence="1">3.5.1.2</ecNumber>
    </recommendedName>
</protein>
<sequence length="308" mass="33597">MARAMDNAILETILQRVRPLIGQGKVADYIPALASVEGSKLGIAICTVDGQHYQAGDAHERFSIQSISKVLSLVVAMRHYPEEEIWQRVGKDPSGSPFNSLVQLEMEQGIPRNPFINAGALVVCDMLQGRLSAPRQRMLEVVRALCGVSDITYDATVARSEFEHSARNAAIAWLMKSFGNFHHDVPTVLQNYFHYCALKMSCMELARTFVFLANQGEAFHLDEPVVTPMQARQINALMATSGMYQNAGEFAWRVGLPAKSGVGGGIVAIVPHEMAIAVWSPELDPAGNSLAGIAALEQLTQTLGRSVY</sequence>
<name>GLSA_SALTY</name>
<proteinExistence type="inferred from homology"/>
<reference key="1">
    <citation type="journal article" date="2001" name="Nature">
        <title>Complete genome sequence of Salmonella enterica serovar Typhimurium LT2.</title>
        <authorList>
            <person name="McClelland M."/>
            <person name="Sanderson K.E."/>
            <person name="Spieth J."/>
            <person name="Clifton S.W."/>
            <person name="Latreille P."/>
            <person name="Courtney L."/>
            <person name="Porwollik S."/>
            <person name="Ali J."/>
            <person name="Dante M."/>
            <person name="Du F."/>
            <person name="Hou S."/>
            <person name="Layman D."/>
            <person name="Leonard S."/>
            <person name="Nguyen C."/>
            <person name="Scott K."/>
            <person name="Holmes A."/>
            <person name="Grewal N."/>
            <person name="Mulvaney E."/>
            <person name="Ryan E."/>
            <person name="Sun H."/>
            <person name="Florea L."/>
            <person name="Miller W."/>
            <person name="Stoneking T."/>
            <person name="Nhan M."/>
            <person name="Waterston R."/>
            <person name="Wilson R.K."/>
        </authorList>
    </citation>
    <scope>NUCLEOTIDE SEQUENCE [LARGE SCALE GENOMIC DNA]</scope>
    <source>
        <strain>LT2 / SGSC1412 / ATCC 700720</strain>
    </source>
</reference>
<accession>Q8ZPI2</accession>
<keyword id="KW-0378">Hydrolase</keyword>
<keyword id="KW-1185">Reference proteome</keyword>
<organism>
    <name type="scientific">Salmonella typhimurium (strain LT2 / SGSC1412 / ATCC 700720)</name>
    <dbReference type="NCBI Taxonomy" id="99287"/>
    <lineage>
        <taxon>Bacteria</taxon>
        <taxon>Pseudomonadati</taxon>
        <taxon>Pseudomonadota</taxon>
        <taxon>Gammaproteobacteria</taxon>
        <taxon>Enterobacterales</taxon>
        <taxon>Enterobacteriaceae</taxon>
        <taxon>Salmonella</taxon>
    </lineage>
</organism>
<comment type="catalytic activity">
    <reaction evidence="1">
        <text>L-glutamine + H2O = L-glutamate + NH4(+)</text>
        <dbReference type="Rhea" id="RHEA:15889"/>
        <dbReference type="ChEBI" id="CHEBI:15377"/>
        <dbReference type="ChEBI" id="CHEBI:28938"/>
        <dbReference type="ChEBI" id="CHEBI:29985"/>
        <dbReference type="ChEBI" id="CHEBI:58359"/>
        <dbReference type="EC" id="3.5.1.2"/>
    </reaction>
</comment>
<comment type="subunit">
    <text evidence="1">Homotetramer.</text>
</comment>
<comment type="similarity">
    <text evidence="1">Belongs to the glutaminase family.</text>
</comment>
<dbReference type="EC" id="3.5.1.2" evidence="1"/>
<dbReference type="EMBL" id="AE006468">
    <property type="protein sequence ID" value="AAL20444.1"/>
    <property type="molecule type" value="Genomic_DNA"/>
</dbReference>
<dbReference type="SMR" id="Q8ZPI2"/>
<dbReference type="STRING" id="99287.STM1525"/>
<dbReference type="PaxDb" id="99287-STM1525"/>
<dbReference type="KEGG" id="stm:STM1525"/>
<dbReference type="PATRIC" id="fig|99287.12.peg.1613"/>
<dbReference type="HOGENOM" id="CLU_027932_1_1_6"/>
<dbReference type="OMA" id="RPRNPFI"/>
<dbReference type="PhylomeDB" id="Q8ZPI2"/>
<dbReference type="BioCyc" id="SENT99287:STM1525-MONOMER"/>
<dbReference type="Proteomes" id="UP000001014">
    <property type="component" value="Chromosome"/>
</dbReference>
<dbReference type="GO" id="GO:0004359">
    <property type="term" value="F:glutaminase activity"/>
    <property type="evidence" value="ECO:0000318"/>
    <property type="project" value="GO_Central"/>
</dbReference>
<dbReference type="GO" id="GO:0006537">
    <property type="term" value="P:glutamate biosynthetic process"/>
    <property type="evidence" value="ECO:0000318"/>
    <property type="project" value="GO_Central"/>
</dbReference>
<dbReference type="GO" id="GO:0006543">
    <property type="term" value="P:glutamine catabolic process"/>
    <property type="evidence" value="ECO:0000318"/>
    <property type="project" value="GO_Central"/>
</dbReference>
<dbReference type="FunFam" id="3.40.710.10:FF:000005">
    <property type="entry name" value="Glutaminase"/>
    <property type="match status" value="1"/>
</dbReference>
<dbReference type="Gene3D" id="3.40.710.10">
    <property type="entry name" value="DD-peptidase/beta-lactamase superfamily"/>
    <property type="match status" value="1"/>
</dbReference>
<dbReference type="HAMAP" id="MF_00313">
    <property type="entry name" value="Glutaminase"/>
    <property type="match status" value="1"/>
</dbReference>
<dbReference type="InterPro" id="IPR012338">
    <property type="entry name" value="Beta-lactam/transpept-like"/>
</dbReference>
<dbReference type="InterPro" id="IPR015868">
    <property type="entry name" value="Glutaminase"/>
</dbReference>
<dbReference type="NCBIfam" id="TIGR03814">
    <property type="entry name" value="Gln_ase"/>
    <property type="match status" value="1"/>
</dbReference>
<dbReference type="NCBIfam" id="NF002132">
    <property type="entry name" value="PRK00971.1-1"/>
    <property type="match status" value="1"/>
</dbReference>
<dbReference type="NCBIfam" id="NF002133">
    <property type="entry name" value="PRK00971.1-2"/>
    <property type="match status" value="1"/>
</dbReference>
<dbReference type="PANTHER" id="PTHR12544">
    <property type="entry name" value="GLUTAMINASE"/>
    <property type="match status" value="1"/>
</dbReference>
<dbReference type="PANTHER" id="PTHR12544:SF29">
    <property type="entry name" value="GLUTAMINASE"/>
    <property type="match status" value="1"/>
</dbReference>
<dbReference type="Pfam" id="PF04960">
    <property type="entry name" value="Glutaminase"/>
    <property type="match status" value="1"/>
</dbReference>
<dbReference type="SUPFAM" id="SSF56601">
    <property type="entry name" value="beta-lactamase/transpeptidase-like"/>
    <property type="match status" value="1"/>
</dbReference>
<evidence type="ECO:0000255" key="1">
    <source>
        <dbReference type="HAMAP-Rule" id="MF_00313"/>
    </source>
</evidence>